<gene>
    <name evidence="5" type="primary">cyp158a2</name>
    <name evidence="6" type="ordered locus">SCO1207</name>
</gene>
<sequence>MTEETISQAVPPVRDWPAVDLPGSDFDPVLTELMREGPVTRISLPNGEGWAWLVTRHDDVRLVTNDPRFGREAVMDRQVTRLAPHFIPARGAVGFLDPPDHTRLRRSVAAAFTARGVERVRERSRGMLDELVDAMLRAGPPADLTEAVLSPFPIAVICELMGVPATDRHSMHTWTQLILSSSHGAEVSERAKNEMNAYFSDLIGLRSDSAGEDVTSLLGAAVGRDEITLSEAVGLAVLLQIGGEAVTNNSGQMFHLLLSRPELAERLRSEPEIRPRAIDELLRWIPHRNAVGLSRIALEDVEIKGVRIRAGDAVYVSYLAANRDPEVFPDPDRIDFERSPNPHVSFGFGPHYCPGGMLARLESELLVDAVLDRVPGLKLAVAPEDVPFKKGALIRGPEALPVTW</sequence>
<feature type="chain" id="PRO_0000430793" description="Biflaviolin synthase CYP158A2">
    <location>
        <begin position="1"/>
        <end position="404"/>
    </location>
</feature>
<feature type="binding site" evidence="2 3 9 10">
    <location>
        <position position="288"/>
    </location>
    <ligand>
        <name>flaviolin</name>
        <dbReference type="ChEBI" id="CHEBI:58696"/>
        <label>1</label>
    </ligand>
</feature>
<feature type="binding site" evidence="2 3 9 10">
    <location>
        <position position="288"/>
    </location>
    <ligand>
        <name>flaviolin</name>
        <dbReference type="ChEBI" id="CHEBI:58696"/>
        <label>2</label>
    </ligand>
</feature>
<feature type="binding site" evidence="2 3 9 10">
    <location>
        <position position="293"/>
    </location>
    <ligand>
        <name>flaviolin</name>
        <dbReference type="ChEBI" id="CHEBI:58696"/>
        <label>1</label>
    </ligand>
</feature>
<feature type="binding site" description="axial binding residue" evidence="2 3 4 7 8 9 10 11 12">
    <location>
        <position position="353"/>
    </location>
    <ligand>
        <name>heme</name>
        <dbReference type="ChEBI" id="CHEBI:30413"/>
    </ligand>
    <ligandPart>
        <name>Fe</name>
        <dbReference type="ChEBI" id="CHEBI:18248"/>
    </ligandPart>
</feature>
<feature type="site" description="Involved in determining product regiospecificity" evidence="4">
    <location>
        <position position="87"/>
    </location>
</feature>
<feature type="mutagenesis site" description="Catalyzes the formation of two isomers of biflaviolin instead of three. Reduced affinity for flaviolin." evidence="4">
    <original>I</original>
    <variation>K</variation>
    <location>
        <position position="87"/>
    </location>
</feature>
<feature type="strand" evidence="13">
    <location>
        <begin position="13"/>
        <end position="15"/>
    </location>
</feature>
<feature type="helix" evidence="13">
    <location>
        <begin position="28"/>
        <end position="36"/>
    </location>
</feature>
<feature type="strand" evidence="13">
    <location>
        <begin position="38"/>
        <end position="43"/>
    </location>
</feature>
<feature type="strand" evidence="13">
    <location>
        <begin position="45"/>
        <end position="49"/>
    </location>
</feature>
<feature type="strand" evidence="13">
    <location>
        <begin position="51"/>
        <end position="54"/>
    </location>
</feature>
<feature type="helix" evidence="13">
    <location>
        <begin position="57"/>
        <end position="64"/>
    </location>
</feature>
<feature type="strand" evidence="13">
    <location>
        <begin position="69"/>
        <end position="71"/>
    </location>
</feature>
<feature type="turn" evidence="13">
    <location>
        <begin position="72"/>
        <end position="78"/>
    </location>
</feature>
<feature type="strand" evidence="13">
    <location>
        <begin position="81"/>
        <end position="85"/>
    </location>
</feature>
<feature type="strand" evidence="14">
    <location>
        <begin position="90"/>
        <end position="92"/>
    </location>
</feature>
<feature type="helix" evidence="13">
    <location>
        <begin position="93"/>
        <end position="95"/>
    </location>
</feature>
<feature type="helix" evidence="13">
    <location>
        <begin position="100"/>
        <end position="112"/>
    </location>
</feature>
<feature type="helix" evidence="13">
    <location>
        <begin position="114"/>
        <end position="138"/>
    </location>
</feature>
<feature type="strand" evidence="13">
    <location>
        <begin position="140"/>
        <end position="143"/>
    </location>
</feature>
<feature type="helix" evidence="13">
    <location>
        <begin position="144"/>
        <end position="147"/>
    </location>
</feature>
<feature type="turn" evidence="13">
    <location>
        <begin position="148"/>
        <end position="150"/>
    </location>
</feature>
<feature type="helix" evidence="13">
    <location>
        <begin position="151"/>
        <end position="161"/>
    </location>
</feature>
<feature type="helix" evidence="13">
    <location>
        <begin position="165"/>
        <end position="167"/>
    </location>
</feature>
<feature type="helix" evidence="13">
    <location>
        <begin position="168"/>
        <end position="182"/>
    </location>
</feature>
<feature type="strand" evidence="15">
    <location>
        <begin position="183"/>
        <end position="186"/>
    </location>
</feature>
<feature type="helix" evidence="13">
    <location>
        <begin position="189"/>
        <end position="192"/>
    </location>
</feature>
<feature type="helix" evidence="13">
    <location>
        <begin position="194"/>
        <end position="204"/>
    </location>
</feature>
<feature type="turn" evidence="16">
    <location>
        <begin position="206"/>
        <end position="208"/>
    </location>
</feature>
<feature type="helix" evidence="13">
    <location>
        <begin position="214"/>
        <end position="223"/>
    </location>
</feature>
<feature type="helix" evidence="13">
    <location>
        <begin position="229"/>
        <end position="242"/>
    </location>
</feature>
<feature type="helix" evidence="13">
    <location>
        <begin position="245"/>
        <end position="259"/>
    </location>
</feature>
<feature type="helix" evidence="13">
    <location>
        <begin position="261"/>
        <end position="269"/>
    </location>
</feature>
<feature type="helix" evidence="13">
    <location>
        <begin position="271"/>
        <end position="273"/>
    </location>
</feature>
<feature type="helix" evidence="13">
    <location>
        <begin position="274"/>
        <end position="284"/>
    </location>
</feature>
<feature type="strand" evidence="13">
    <location>
        <begin position="288"/>
        <end position="290"/>
    </location>
</feature>
<feature type="strand" evidence="13">
    <location>
        <begin position="295"/>
        <end position="299"/>
    </location>
</feature>
<feature type="strand" evidence="13">
    <location>
        <begin position="301"/>
        <end position="303"/>
    </location>
</feature>
<feature type="strand" evidence="13">
    <location>
        <begin position="306"/>
        <end position="308"/>
    </location>
</feature>
<feature type="strand" evidence="13">
    <location>
        <begin position="313"/>
        <end position="316"/>
    </location>
</feature>
<feature type="helix" evidence="13">
    <location>
        <begin position="318"/>
        <end position="321"/>
    </location>
</feature>
<feature type="turn" evidence="13">
    <location>
        <begin position="325"/>
        <end position="327"/>
    </location>
</feature>
<feature type="strand" evidence="13">
    <location>
        <begin position="328"/>
        <end position="330"/>
    </location>
</feature>
<feature type="helix" evidence="13">
    <location>
        <begin position="356"/>
        <end position="373"/>
    </location>
</feature>
<feature type="strand" evidence="13">
    <location>
        <begin position="378"/>
        <end position="381"/>
    </location>
</feature>
<feature type="helix" evidence="13">
    <location>
        <begin position="383"/>
        <end position="385"/>
    </location>
</feature>
<feature type="strand" evidence="13">
    <location>
        <begin position="401"/>
        <end position="403"/>
    </location>
</feature>
<keyword id="KW-0002">3D-structure</keyword>
<keyword id="KW-0349">Heme</keyword>
<keyword id="KW-0408">Iron</keyword>
<keyword id="KW-0479">Metal-binding</keyword>
<keyword id="KW-0503">Monooxygenase</keyword>
<keyword id="KW-0560">Oxidoreductase</keyword>
<keyword id="KW-1185">Reference proteome</keyword>
<accession>Q9FCA6</accession>
<organism>
    <name type="scientific">Streptomyces coelicolor (strain ATCC BAA-471 / A3(2) / M145)</name>
    <dbReference type="NCBI Taxonomy" id="100226"/>
    <lineage>
        <taxon>Bacteria</taxon>
        <taxon>Bacillati</taxon>
        <taxon>Actinomycetota</taxon>
        <taxon>Actinomycetes</taxon>
        <taxon>Kitasatosporales</taxon>
        <taxon>Streptomycetaceae</taxon>
        <taxon>Streptomyces</taxon>
        <taxon>Streptomyces albidoflavus group</taxon>
    </lineage>
</organism>
<evidence type="ECO:0000255" key="1">
    <source>
        <dbReference type="RuleBase" id="RU000461"/>
    </source>
</evidence>
<evidence type="ECO:0000269" key="2">
    <source>
    </source>
</evidence>
<evidence type="ECO:0000269" key="3">
    <source>
    </source>
</evidence>
<evidence type="ECO:0000269" key="4">
    <source>
    </source>
</evidence>
<evidence type="ECO:0000303" key="5">
    <source>
    </source>
</evidence>
<evidence type="ECO:0000312" key="6">
    <source>
        <dbReference type="EMBL" id="CAC01489.1"/>
    </source>
</evidence>
<evidence type="ECO:0007744" key="7">
    <source>
        <dbReference type="PDB" id="1S1F"/>
    </source>
</evidence>
<evidence type="ECO:0007744" key="8">
    <source>
        <dbReference type="PDB" id="1SE6"/>
    </source>
</evidence>
<evidence type="ECO:0007744" key="9">
    <source>
        <dbReference type="PDB" id="1T93"/>
    </source>
</evidence>
<evidence type="ECO:0007744" key="10">
    <source>
        <dbReference type="PDB" id="2D09"/>
    </source>
</evidence>
<evidence type="ECO:0007744" key="11">
    <source>
        <dbReference type="PDB" id="2D0E"/>
    </source>
</evidence>
<evidence type="ECO:0007744" key="12">
    <source>
        <dbReference type="PDB" id="3TZO"/>
    </source>
</evidence>
<evidence type="ECO:0007829" key="13">
    <source>
        <dbReference type="PDB" id="1S1F"/>
    </source>
</evidence>
<evidence type="ECO:0007829" key="14">
    <source>
        <dbReference type="PDB" id="1SE6"/>
    </source>
</evidence>
<evidence type="ECO:0007829" key="15">
    <source>
        <dbReference type="PDB" id="2D0E"/>
    </source>
</evidence>
<evidence type="ECO:0007829" key="16">
    <source>
        <dbReference type="PDB" id="3TZO"/>
    </source>
</evidence>
<dbReference type="EC" id="1.14.19.69" evidence="2 3 4"/>
<dbReference type="EMBL" id="AL939108">
    <property type="protein sequence ID" value="CAC01489.1"/>
    <property type="molecule type" value="Genomic_DNA"/>
</dbReference>
<dbReference type="RefSeq" id="NP_625496.1">
    <property type="nucleotide sequence ID" value="NC_003888.3"/>
</dbReference>
<dbReference type="RefSeq" id="WP_003977624.1">
    <property type="nucleotide sequence ID" value="NZ_VNID01000006.1"/>
</dbReference>
<dbReference type="PDB" id="1S1F">
    <property type="method" value="X-ray"/>
    <property type="resolution" value="1.50 A"/>
    <property type="chains" value="A=1-404"/>
</dbReference>
<dbReference type="PDB" id="1SE6">
    <property type="method" value="X-ray"/>
    <property type="resolution" value="1.75 A"/>
    <property type="chains" value="A/B=1-404"/>
</dbReference>
<dbReference type="PDB" id="1T93">
    <property type="method" value="X-ray"/>
    <property type="resolution" value="1.62 A"/>
    <property type="chains" value="A=1-404"/>
</dbReference>
<dbReference type="PDB" id="2D09">
    <property type="method" value="X-ray"/>
    <property type="resolution" value="1.80 A"/>
    <property type="chains" value="A=1-404"/>
</dbReference>
<dbReference type="PDB" id="2D0E">
    <property type="method" value="X-ray"/>
    <property type="resolution" value="2.15 A"/>
    <property type="chains" value="A=1-404"/>
</dbReference>
<dbReference type="PDB" id="3TZO">
    <property type="method" value="X-ray"/>
    <property type="resolution" value="1.76 A"/>
    <property type="chains" value="A/B=1-404"/>
</dbReference>
<dbReference type="PDB" id="5DE9">
    <property type="method" value="X-ray"/>
    <property type="resolution" value="1.76 A"/>
    <property type="chains" value="A/B=1-404"/>
</dbReference>
<dbReference type="PDBsum" id="1S1F"/>
<dbReference type="PDBsum" id="1SE6"/>
<dbReference type="PDBsum" id="1T93"/>
<dbReference type="PDBsum" id="2D09"/>
<dbReference type="PDBsum" id="2D0E"/>
<dbReference type="PDBsum" id="3TZO"/>
<dbReference type="PDBsum" id="5DE9"/>
<dbReference type="SMR" id="Q9FCA6"/>
<dbReference type="STRING" id="100226.gene:17758790"/>
<dbReference type="DrugBank" id="DB03814">
    <property type="generic name" value="2-(N-morpholino)ethanesulfonic acid"/>
</dbReference>
<dbReference type="DrugBank" id="DB03254">
    <property type="generic name" value="4-Phenyl-1h-Imidazole"/>
</dbReference>
<dbReference type="DrugBank" id="DB02521">
    <property type="generic name" value="Flaviolin"/>
</dbReference>
<dbReference type="DrugBank" id="DB02175">
    <property type="generic name" value="Malonic acid"/>
</dbReference>
<dbReference type="PaxDb" id="100226-SCO1207"/>
<dbReference type="KEGG" id="sco:SCO1207"/>
<dbReference type="PATRIC" id="fig|100226.15.peg.1206"/>
<dbReference type="eggNOG" id="COG2124">
    <property type="taxonomic scope" value="Bacteria"/>
</dbReference>
<dbReference type="HOGENOM" id="CLU_033716_1_1_11"/>
<dbReference type="InParanoid" id="Q9FCA6"/>
<dbReference type="OrthoDB" id="141712at2"/>
<dbReference type="PhylomeDB" id="Q9FCA6"/>
<dbReference type="BioCyc" id="MetaCyc:MONOMER-14458"/>
<dbReference type="BRENDA" id="1.14.19.69">
    <property type="organism ID" value="5998"/>
</dbReference>
<dbReference type="EvolutionaryTrace" id="Q9FCA6"/>
<dbReference type="Proteomes" id="UP000001973">
    <property type="component" value="Chromosome"/>
</dbReference>
<dbReference type="GO" id="GO:0020037">
    <property type="term" value="F:heme binding"/>
    <property type="evidence" value="ECO:0000314"/>
    <property type="project" value="UniProtKB"/>
</dbReference>
<dbReference type="GO" id="GO:0005506">
    <property type="term" value="F:iron ion binding"/>
    <property type="evidence" value="ECO:0000314"/>
    <property type="project" value="UniProtKB"/>
</dbReference>
<dbReference type="GO" id="GO:0004497">
    <property type="term" value="F:monooxygenase activity"/>
    <property type="evidence" value="ECO:0000314"/>
    <property type="project" value="UniProtKB"/>
</dbReference>
<dbReference type="GO" id="GO:0016705">
    <property type="term" value="F:oxidoreductase activity, acting on paired donors, with incorporation or reduction of molecular oxygen"/>
    <property type="evidence" value="ECO:0000314"/>
    <property type="project" value="UniProtKB"/>
</dbReference>
<dbReference type="GO" id="GO:0042440">
    <property type="term" value="P:pigment metabolic process"/>
    <property type="evidence" value="ECO:0000314"/>
    <property type="project" value="UniProtKB"/>
</dbReference>
<dbReference type="CDD" id="cd11031">
    <property type="entry name" value="Cyp158A-like"/>
    <property type="match status" value="1"/>
</dbReference>
<dbReference type="FunFam" id="1.10.630.10:FF:000018">
    <property type="entry name" value="Cytochrome P450 monooxygenase"/>
    <property type="match status" value="1"/>
</dbReference>
<dbReference type="Gene3D" id="1.10.630.10">
    <property type="entry name" value="Cytochrome P450"/>
    <property type="match status" value="1"/>
</dbReference>
<dbReference type="InterPro" id="IPR001128">
    <property type="entry name" value="Cyt_P450"/>
</dbReference>
<dbReference type="InterPro" id="IPR002397">
    <property type="entry name" value="Cyt_P450_B"/>
</dbReference>
<dbReference type="InterPro" id="IPR017972">
    <property type="entry name" value="Cyt_P450_CS"/>
</dbReference>
<dbReference type="InterPro" id="IPR036396">
    <property type="entry name" value="Cyt_P450_sf"/>
</dbReference>
<dbReference type="PANTHER" id="PTHR46696:SF1">
    <property type="entry name" value="CYTOCHROME P450 YJIB-RELATED"/>
    <property type="match status" value="1"/>
</dbReference>
<dbReference type="PANTHER" id="PTHR46696">
    <property type="entry name" value="P450, PUTATIVE (EUROFUNG)-RELATED"/>
    <property type="match status" value="1"/>
</dbReference>
<dbReference type="Pfam" id="PF00067">
    <property type="entry name" value="p450"/>
    <property type="match status" value="1"/>
</dbReference>
<dbReference type="PRINTS" id="PR00359">
    <property type="entry name" value="BP450"/>
</dbReference>
<dbReference type="SUPFAM" id="SSF48264">
    <property type="entry name" value="Cytochrome P450"/>
    <property type="match status" value="1"/>
</dbReference>
<dbReference type="PROSITE" id="PS00086">
    <property type="entry name" value="CYTOCHROME_P450"/>
    <property type="match status" value="1"/>
</dbReference>
<reference key="1">
    <citation type="journal article" date="2002" name="Nature">
        <title>Complete genome sequence of the model actinomycete Streptomyces coelicolor A3(2).</title>
        <authorList>
            <person name="Bentley S.D."/>
            <person name="Chater K.F."/>
            <person name="Cerdeno-Tarraga A.-M."/>
            <person name="Challis G.L."/>
            <person name="Thomson N.R."/>
            <person name="James K.D."/>
            <person name="Harris D.E."/>
            <person name="Quail M.A."/>
            <person name="Kieser H."/>
            <person name="Harper D."/>
            <person name="Bateman A."/>
            <person name="Brown S."/>
            <person name="Chandra G."/>
            <person name="Chen C.W."/>
            <person name="Collins M."/>
            <person name="Cronin A."/>
            <person name="Fraser A."/>
            <person name="Goble A."/>
            <person name="Hidalgo J."/>
            <person name="Hornsby T."/>
            <person name="Howarth S."/>
            <person name="Huang C.-H."/>
            <person name="Kieser T."/>
            <person name="Larke L."/>
            <person name="Murphy L.D."/>
            <person name="Oliver K."/>
            <person name="O'Neil S."/>
            <person name="Rabbinowitsch E."/>
            <person name="Rajandream M.A."/>
            <person name="Rutherford K.M."/>
            <person name="Rutter S."/>
            <person name="Seeger K."/>
            <person name="Saunders D."/>
            <person name="Sharp S."/>
            <person name="Squares R."/>
            <person name="Squares S."/>
            <person name="Taylor K."/>
            <person name="Warren T."/>
            <person name="Wietzorrek A."/>
            <person name="Woodward J.R."/>
            <person name="Barrell B.G."/>
            <person name="Parkhill J."/>
            <person name="Hopwood D.A."/>
        </authorList>
    </citation>
    <scope>NUCLEOTIDE SEQUENCE [LARGE SCALE GENOMIC DNA]</scope>
    <source>
        <strain>ATCC BAA-471 / A3(2) / M145</strain>
    </source>
</reference>
<reference key="2">
    <citation type="journal article" date="2005" name="J. Biol. Chem.">
        <title>Binding of two flaviolin substrate molecules, oxidative coupling, and crystal structure of Streptomyces coelicolor A3(2) cytochrome P450 158A2.</title>
        <authorList>
            <person name="Zhao B."/>
            <person name="Guengerich F.P."/>
            <person name="Bellamine A."/>
            <person name="Lamb D.C."/>
            <person name="Izumikawa M."/>
            <person name="Lei L."/>
            <person name="Podust L.M."/>
            <person name="Sundaramoorthy M."/>
            <person name="Kalaitzis J.A."/>
            <person name="Reddy L.M."/>
            <person name="Kelly S.L."/>
            <person name="Moore B.S."/>
            <person name="Stec D."/>
            <person name="Voehler M."/>
            <person name="Falck J.R."/>
            <person name="Shimada T."/>
            <person name="Waterman M.R."/>
        </authorList>
    </citation>
    <scope>X-RAY CRYSTALLOGRAPHY (1.50 ANGSTROMS) IN COMPLEX WITH HEME AND SUBSTRATE</scope>
    <scope>FUNCTION</scope>
    <scope>CATALYTIC ACTIVITY</scope>
    <scope>BIOPHYSICOCHEMICAL PROPERTIES</scope>
</reference>
<reference key="3">
    <citation type="journal article" date="2005" name="J. Biol. Chem.">
        <title>Role of active site water molecules and substrate hydroxyl groups in oxygen activation by cytochrome P450 158A2: a new mechanism of proton transfer.</title>
        <authorList>
            <person name="Zhao B."/>
            <person name="Guengerich F.P."/>
            <person name="Voehler M."/>
            <person name="Waterman M.R."/>
        </authorList>
    </citation>
    <scope>X-RAY CRYSTALLOGRAPHY (1.80 ANGSTROMS) IN COMPLEX WITH HEME AND SUBSTRATE</scope>
    <scope>FUNCTION</scope>
    <scope>CATALYTIC ACTIVITY</scope>
    <scope>BIOPHYSICOCHEMICAL PROPERTIES</scope>
    <scope>PROTON WIRE</scope>
</reference>
<reference key="4">
    <citation type="journal article" date="2012" name="Arch. Biochem. Biophys.">
        <title>The role of Ile87 of CYP158A2 in oxidative coupling reaction.</title>
        <authorList>
            <person name="Zhao B."/>
            <person name="Bellamine A."/>
            <person name="Lei L."/>
            <person name="Waterman M.R."/>
        </authorList>
    </citation>
    <scope>X-RAY CRYSTALLOGRAPHY (1.76 ANGSTROMS) IN COMPLEX WITH HEME</scope>
    <scope>MUTAGENESIS OF ILE-87</scope>
    <scope>BIOPHYSICOCHEMICAL PROPERTIES</scope>
    <scope>CATALYTIC ACTIVITY</scope>
    <scope>REGIOSPECIFICITY SITE</scope>
</reference>
<name>C1582_STRCO</name>
<protein>
    <recommendedName>
        <fullName>Biflaviolin synthase CYP158A2</fullName>
        <ecNumber evidence="2 3 4">1.14.19.69</ecNumber>
    </recommendedName>
    <alternativeName>
        <fullName evidence="5">Cytochrome P450 158A2</fullName>
        <shortName evidence="5">CYP158A2</shortName>
    </alternativeName>
</protein>
<proteinExistence type="evidence at protein level"/>
<comment type="function">
    <text evidence="2 3">Catalyzes oxidative C-C coupling reaction to polymerize flaviolin and form highly conjugated pigments which protect the soil bacterium from deleterious effects of UV irradiation (three isomers of biflaviolin and one triflaviolin).</text>
</comment>
<comment type="catalytic activity">
    <reaction evidence="2 3 4">
        <text>2 flaviolin + 2 reduced [2Fe-2S]-[ferredoxin] + O2 + H(+) = 3,3'-biflaviolin + 2 oxidized [2Fe-2S]-[ferredoxin] + 2 H2O</text>
        <dbReference type="Rhea" id="RHEA:26031"/>
        <dbReference type="Rhea" id="RHEA-COMP:10000"/>
        <dbReference type="Rhea" id="RHEA-COMP:10001"/>
        <dbReference type="ChEBI" id="CHEBI:15377"/>
        <dbReference type="ChEBI" id="CHEBI:15378"/>
        <dbReference type="ChEBI" id="CHEBI:15379"/>
        <dbReference type="ChEBI" id="CHEBI:33737"/>
        <dbReference type="ChEBI" id="CHEBI:33738"/>
        <dbReference type="ChEBI" id="CHEBI:58696"/>
        <dbReference type="ChEBI" id="CHEBI:77877"/>
        <dbReference type="EC" id="1.14.19.69"/>
    </reaction>
</comment>
<comment type="catalytic activity">
    <reaction evidence="2 3 4">
        <text>2 flaviolin + 2 reduced [2Fe-2S]-[ferredoxin] + O2 + H(+) = 3,8'-biflaviolin + 2 oxidized [2Fe-2S]-[ferredoxin] + 2 H2O</text>
        <dbReference type="Rhea" id="RHEA:26035"/>
        <dbReference type="Rhea" id="RHEA-COMP:10000"/>
        <dbReference type="Rhea" id="RHEA-COMP:10001"/>
        <dbReference type="ChEBI" id="CHEBI:15377"/>
        <dbReference type="ChEBI" id="CHEBI:15378"/>
        <dbReference type="ChEBI" id="CHEBI:15379"/>
        <dbReference type="ChEBI" id="CHEBI:33737"/>
        <dbReference type="ChEBI" id="CHEBI:33738"/>
        <dbReference type="ChEBI" id="CHEBI:58696"/>
        <dbReference type="ChEBI" id="CHEBI:77840"/>
        <dbReference type="EC" id="1.14.19.69"/>
    </reaction>
</comment>
<comment type="cofactor">
    <cofactor evidence="2 3 4">
        <name>heme</name>
        <dbReference type="ChEBI" id="CHEBI:30413"/>
    </cofactor>
</comment>
<comment type="biophysicochemical properties">
    <kinetics>
        <KM evidence="4">7.3 uM for flaviolin (at pH 8.2 and 37 degrees Celsius)</KM>
        <text evidence="2 3">kcat is 1.4 min(-1) with flaviolin as substrate (at pH 7.5 and 37 degrees Celsius). kcat is 0.02 min(-1) with 2-hydroxy-1,4-naphthoquinone as substrate (at pH 7.5 and 25 degrees Celsius).</text>
    </kinetics>
</comment>
<comment type="pathway">
    <text evidence="5">Pigment biosynthesis.</text>
</comment>
<comment type="miscellaneous">
    <text evidence="3 4">The structural studies suggest catalysis likely occurs through proton relay via a 'proton wire' formed by water molecules in the active site.</text>
</comment>
<comment type="similarity">
    <text evidence="1">Belongs to the cytochrome P450 family.</text>
</comment>